<reference key="1">
    <citation type="journal article" date="1998" name="Eur. J. Biochem.">
        <title>Structural and functional divergence of class II alcohol dehydrogenase -- cloning and characterisation of rabbit liver isoforms of the enzyme.</title>
        <authorList>
            <person name="Svensson S."/>
            <person name="Hedberg J."/>
            <person name="Hoeoeg J.-O."/>
        </authorList>
    </citation>
    <scope>NUCLEOTIDE SEQUENCE [MRNA]</scope>
    <source>
        <strain>New Zealand white</strain>
        <tissue>Liver</tissue>
    </source>
</reference>
<comment type="catalytic activity">
    <reaction>
        <text>a primary alcohol + NAD(+) = an aldehyde + NADH + H(+)</text>
        <dbReference type="Rhea" id="RHEA:10736"/>
        <dbReference type="ChEBI" id="CHEBI:15378"/>
        <dbReference type="ChEBI" id="CHEBI:15734"/>
        <dbReference type="ChEBI" id="CHEBI:17478"/>
        <dbReference type="ChEBI" id="CHEBI:57540"/>
        <dbReference type="ChEBI" id="CHEBI:57945"/>
        <dbReference type="EC" id="1.1.1.1"/>
    </reaction>
</comment>
<comment type="catalytic activity">
    <reaction>
        <text>a secondary alcohol + NAD(+) = a ketone + NADH + H(+)</text>
        <dbReference type="Rhea" id="RHEA:10740"/>
        <dbReference type="ChEBI" id="CHEBI:15378"/>
        <dbReference type="ChEBI" id="CHEBI:17087"/>
        <dbReference type="ChEBI" id="CHEBI:35681"/>
        <dbReference type="ChEBI" id="CHEBI:57540"/>
        <dbReference type="ChEBI" id="CHEBI:57945"/>
        <dbReference type="EC" id="1.1.1.1"/>
    </reaction>
</comment>
<comment type="cofactor">
    <cofactor evidence="1">
        <name>Zn(2+)</name>
        <dbReference type="ChEBI" id="CHEBI:29105"/>
    </cofactor>
    <text evidence="1">Binds 2 Zn(2+) ions per subunit.</text>
</comment>
<comment type="subunit">
    <text evidence="1">Homodimer.</text>
</comment>
<comment type="subcellular location">
    <subcellularLocation>
        <location>Cytoplasm</location>
    </subcellularLocation>
</comment>
<comment type="similarity">
    <text evidence="2">Belongs to the zinc-containing alcohol dehydrogenase family. Class-II subfamily.</text>
</comment>
<proteinExistence type="evidence at transcript level"/>
<accession>O46649</accession>
<evidence type="ECO:0000250" key="1"/>
<evidence type="ECO:0000305" key="2"/>
<name>ADHP_RABIT</name>
<protein>
    <recommendedName>
        <fullName>Alcohol dehydrogenase class-2 isozyme 1</fullName>
        <ecNumber>1.1.1.1</ecNumber>
    </recommendedName>
</protein>
<feature type="chain" id="PRO_0000160684" description="Alcohol dehydrogenase class-2 isozyme 1">
    <location>
        <begin position="1"/>
        <end position="379"/>
    </location>
</feature>
<feature type="binding site" evidence="1">
    <location>
        <position position="47"/>
    </location>
    <ligand>
        <name>Zn(2+)</name>
        <dbReference type="ChEBI" id="CHEBI:29105"/>
        <label>1</label>
        <note>catalytic</note>
    </ligand>
</feature>
<feature type="binding site" evidence="1">
    <location>
        <position position="69"/>
    </location>
    <ligand>
        <name>Zn(2+)</name>
        <dbReference type="ChEBI" id="CHEBI:29105"/>
        <label>1</label>
        <note>catalytic</note>
    </ligand>
</feature>
<feature type="binding site" evidence="1">
    <location>
        <position position="99"/>
    </location>
    <ligand>
        <name>Zn(2+)</name>
        <dbReference type="ChEBI" id="CHEBI:29105"/>
        <label>2</label>
    </ligand>
</feature>
<feature type="binding site" evidence="1">
    <location>
        <position position="102"/>
    </location>
    <ligand>
        <name>Zn(2+)</name>
        <dbReference type="ChEBI" id="CHEBI:29105"/>
        <label>2</label>
    </ligand>
</feature>
<feature type="binding site" evidence="1">
    <location>
        <position position="105"/>
    </location>
    <ligand>
        <name>Zn(2+)</name>
        <dbReference type="ChEBI" id="CHEBI:29105"/>
        <label>2</label>
    </ligand>
</feature>
<feature type="binding site" evidence="1">
    <location>
        <position position="113"/>
    </location>
    <ligand>
        <name>Zn(2+)</name>
        <dbReference type="ChEBI" id="CHEBI:29105"/>
        <label>2</label>
    </ligand>
</feature>
<feature type="binding site" evidence="1">
    <location>
        <position position="176"/>
    </location>
    <ligand>
        <name>Zn(2+)</name>
        <dbReference type="ChEBI" id="CHEBI:29105"/>
        <label>1</label>
        <note>catalytic</note>
    </ligand>
</feature>
<feature type="binding site" evidence="1">
    <location>
        <begin position="205"/>
        <end position="210"/>
    </location>
    <ligand>
        <name>NAD(+)</name>
        <dbReference type="ChEBI" id="CHEBI:57540"/>
    </ligand>
</feature>
<feature type="binding site" evidence="1">
    <location>
        <position position="229"/>
    </location>
    <ligand>
        <name>NAD(+)</name>
        <dbReference type="ChEBI" id="CHEBI:57540"/>
    </ligand>
</feature>
<feature type="binding site" evidence="1">
    <location>
        <position position="234"/>
    </location>
    <ligand>
        <name>NAD(+)</name>
        <dbReference type="ChEBI" id="CHEBI:57540"/>
    </ligand>
</feature>
<feature type="binding site" evidence="1">
    <location>
        <begin position="298"/>
        <end position="300"/>
    </location>
    <ligand>
        <name>NAD(+)</name>
        <dbReference type="ChEBI" id="CHEBI:57540"/>
    </ligand>
</feature>
<feature type="binding site" evidence="1">
    <location>
        <position position="374"/>
    </location>
    <ligand>
        <name>NAD(+)</name>
        <dbReference type="ChEBI" id="CHEBI:57540"/>
    </ligand>
</feature>
<gene>
    <name type="primary">ADH2-1</name>
</gene>
<dbReference type="EC" id="1.1.1.1"/>
<dbReference type="EMBL" id="AJ002388">
    <property type="protein sequence ID" value="CAA05362.1"/>
    <property type="molecule type" value="mRNA"/>
</dbReference>
<dbReference type="RefSeq" id="NP_001164342.1">
    <property type="nucleotide sequence ID" value="NM_001170871.1"/>
</dbReference>
<dbReference type="SMR" id="O46649"/>
<dbReference type="FunCoup" id="O46649">
    <property type="interactions" value="7"/>
</dbReference>
<dbReference type="PaxDb" id="9986-ENSOCUP00000010873"/>
<dbReference type="GeneID" id="100327260"/>
<dbReference type="KEGG" id="ocu:100327260"/>
<dbReference type="CTD" id="100327260"/>
<dbReference type="eggNOG" id="KOG0022">
    <property type="taxonomic scope" value="Eukaryota"/>
</dbReference>
<dbReference type="InParanoid" id="O46649"/>
<dbReference type="OrthoDB" id="417550at2759"/>
<dbReference type="Proteomes" id="UP000001811">
    <property type="component" value="Unplaced"/>
</dbReference>
<dbReference type="GO" id="GO:0005829">
    <property type="term" value="C:cytosol"/>
    <property type="evidence" value="ECO:0007669"/>
    <property type="project" value="TreeGrafter"/>
</dbReference>
<dbReference type="GO" id="GO:0004022">
    <property type="term" value="F:alcohol dehydrogenase (NAD+) activity"/>
    <property type="evidence" value="ECO:0007669"/>
    <property type="project" value="UniProtKB-EC"/>
</dbReference>
<dbReference type="GO" id="GO:0051903">
    <property type="term" value="F:S-(hydroxymethyl)glutathione dehydrogenase [NAD(P)+] activity"/>
    <property type="evidence" value="ECO:0007669"/>
    <property type="project" value="TreeGrafter"/>
</dbReference>
<dbReference type="GO" id="GO:0008270">
    <property type="term" value="F:zinc ion binding"/>
    <property type="evidence" value="ECO:0007669"/>
    <property type="project" value="InterPro"/>
</dbReference>
<dbReference type="GO" id="GO:0046294">
    <property type="term" value="P:formaldehyde catabolic process"/>
    <property type="evidence" value="ECO:0007669"/>
    <property type="project" value="TreeGrafter"/>
</dbReference>
<dbReference type="CDD" id="cd08299">
    <property type="entry name" value="alcohol_DH_class_I_II_IV"/>
    <property type="match status" value="1"/>
</dbReference>
<dbReference type="FunFam" id="3.90.180.10:FF:000067">
    <property type="entry name" value="alcohol dehydrogenase 1-like isoform X1"/>
    <property type="match status" value="1"/>
</dbReference>
<dbReference type="FunFam" id="3.40.50.720:FF:000003">
    <property type="entry name" value="S-(hydroxymethyl)glutathione dehydrogenase"/>
    <property type="match status" value="1"/>
</dbReference>
<dbReference type="Gene3D" id="3.90.180.10">
    <property type="entry name" value="Medium-chain alcohol dehydrogenases, catalytic domain"/>
    <property type="match status" value="1"/>
</dbReference>
<dbReference type="Gene3D" id="3.40.50.720">
    <property type="entry name" value="NAD(P)-binding Rossmann-like Domain"/>
    <property type="match status" value="1"/>
</dbReference>
<dbReference type="InterPro" id="IPR013149">
    <property type="entry name" value="ADH-like_C"/>
</dbReference>
<dbReference type="InterPro" id="IPR013154">
    <property type="entry name" value="ADH-like_N"/>
</dbReference>
<dbReference type="InterPro" id="IPR002328">
    <property type="entry name" value="ADH_Zn_CS"/>
</dbReference>
<dbReference type="InterPro" id="IPR011032">
    <property type="entry name" value="GroES-like_sf"/>
</dbReference>
<dbReference type="InterPro" id="IPR036291">
    <property type="entry name" value="NAD(P)-bd_dom_sf"/>
</dbReference>
<dbReference type="InterPro" id="IPR020843">
    <property type="entry name" value="PKS_ER"/>
</dbReference>
<dbReference type="PANTHER" id="PTHR43880">
    <property type="entry name" value="ALCOHOL DEHYDROGENASE"/>
    <property type="match status" value="1"/>
</dbReference>
<dbReference type="PANTHER" id="PTHR43880:SF14">
    <property type="entry name" value="ALL-TRANS-RETINOL DEHYDROGENASE [NAD(+)] ADH4"/>
    <property type="match status" value="1"/>
</dbReference>
<dbReference type="Pfam" id="PF08240">
    <property type="entry name" value="ADH_N"/>
    <property type="match status" value="1"/>
</dbReference>
<dbReference type="Pfam" id="PF00107">
    <property type="entry name" value="ADH_zinc_N"/>
    <property type="match status" value="1"/>
</dbReference>
<dbReference type="SMART" id="SM00829">
    <property type="entry name" value="PKS_ER"/>
    <property type="match status" value="1"/>
</dbReference>
<dbReference type="SUPFAM" id="SSF50129">
    <property type="entry name" value="GroES-like"/>
    <property type="match status" value="2"/>
</dbReference>
<dbReference type="SUPFAM" id="SSF51735">
    <property type="entry name" value="NAD(P)-binding Rossmann-fold domains"/>
    <property type="match status" value="1"/>
</dbReference>
<dbReference type="PROSITE" id="PS00059">
    <property type="entry name" value="ADH_ZINC"/>
    <property type="match status" value="1"/>
</dbReference>
<sequence>MGTKGKVIKCKAAIAWEAGKPLSIEEVEVAPPKAHEVRVQINAAGLCRSDTHVINPKFEGAFLPVILGHEGAGIVESVGPGVTNVKPGDKVIPLYIPHCKKCKFCLSPLTNFCEKFCKGKNPLIEQELMEDKTSRFTCKGKSIYHFFGISAFSQYTVVKDVNLAKIDDDANLERVCLIGCGFSTGYGAAINTAKVTPGSTCAVFGLGGVGLSAIMGCKTAGASRIIAIDINSDKFAKAKALGATDCLNPRELNKPVQDVIVEMTNGGVDFAIDCAGGSEVMKATVDCATVGWGSCTFVGVNLADKGLTISPIELILGRTLKGTNFGGWDAETVPKLVSDYKNGKFDLDALVTHTLPFDKINEALNLLDQGKSIRTVLIF</sequence>
<keyword id="KW-0963">Cytoplasm</keyword>
<keyword id="KW-0479">Metal-binding</keyword>
<keyword id="KW-0520">NAD</keyword>
<keyword id="KW-0560">Oxidoreductase</keyword>
<keyword id="KW-1185">Reference proteome</keyword>
<keyword id="KW-0862">Zinc</keyword>
<organism>
    <name type="scientific">Oryctolagus cuniculus</name>
    <name type="common">Rabbit</name>
    <dbReference type="NCBI Taxonomy" id="9986"/>
    <lineage>
        <taxon>Eukaryota</taxon>
        <taxon>Metazoa</taxon>
        <taxon>Chordata</taxon>
        <taxon>Craniata</taxon>
        <taxon>Vertebrata</taxon>
        <taxon>Euteleostomi</taxon>
        <taxon>Mammalia</taxon>
        <taxon>Eutheria</taxon>
        <taxon>Euarchontoglires</taxon>
        <taxon>Glires</taxon>
        <taxon>Lagomorpha</taxon>
        <taxon>Leporidae</taxon>
        <taxon>Oryctolagus</taxon>
    </lineage>
</organism>